<evidence type="ECO:0000250" key="1">
    <source>
        <dbReference type="UniProtKB" id="P02621"/>
    </source>
</evidence>
<evidence type="ECO:0000255" key="2">
    <source>
        <dbReference type="PROSITE-ProRule" id="PRU00448"/>
    </source>
</evidence>
<evidence type="ECO:0000269" key="3">
    <source>
    </source>
</evidence>
<evidence type="ECO:0000305" key="4"/>
<evidence type="ECO:0007829" key="5">
    <source>
        <dbReference type="PDB" id="2PVB"/>
    </source>
</evidence>
<evidence type="ECO:0007829" key="6">
    <source>
        <dbReference type="PDB" id="4PAL"/>
    </source>
</evidence>
<protein>
    <recommendedName>
        <fullName>Parvalbumin beta</fullName>
    </recommendedName>
    <alternativeName>
        <fullName>Parvalbumin II</fullName>
    </alternativeName>
    <alternativeName>
        <fullName>Parvalbumin pI 4.10</fullName>
    </alternativeName>
    <alternativeName>
        <fullName>Parvalbumin-2</fullName>
    </alternativeName>
</protein>
<proteinExistence type="evidence at protein level"/>
<organism>
    <name type="scientific">Esox lucius</name>
    <name type="common">Northern pike</name>
    <dbReference type="NCBI Taxonomy" id="8010"/>
    <lineage>
        <taxon>Eukaryota</taxon>
        <taxon>Metazoa</taxon>
        <taxon>Chordata</taxon>
        <taxon>Craniata</taxon>
        <taxon>Vertebrata</taxon>
        <taxon>Euteleostomi</taxon>
        <taxon>Actinopterygii</taxon>
        <taxon>Neopterygii</taxon>
        <taxon>Teleostei</taxon>
        <taxon>Protacanthopterygii</taxon>
        <taxon>Esociformes</taxon>
        <taxon>Esocidae</taxon>
        <taxon>Esox</taxon>
    </lineage>
</organism>
<feature type="chain" id="PRO_0000073607" description="Parvalbumin beta">
    <location>
        <begin position="1"/>
        <end position="107"/>
    </location>
</feature>
<feature type="domain" description="EF-hand 1" evidence="2">
    <location>
        <begin position="37"/>
        <end position="72"/>
    </location>
</feature>
<feature type="domain" description="EF-hand 2" evidence="2">
    <location>
        <begin position="76"/>
        <end position="107"/>
    </location>
</feature>
<feature type="binding site" evidence="1 2">
    <location>
        <position position="50"/>
    </location>
    <ligand>
        <name>Ca(2+)</name>
        <dbReference type="ChEBI" id="CHEBI:29108"/>
        <label>1</label>
    </ligand>
</feature>
<feature type="binding site" evidence="1 2">
    <location>
        <position position="52"/>
    </location>
    <ligand>
        <name>Ca(2+)</name>
        <dbReference type="ChEBI" id="CHEBI:29108"/>
        <label>1</label>
    </ligand>
</feature>
<feature type="binding site" evidence="1 2">
    <location>
        <position position="54"/>
    </location>
    <ligand>
        <name>Ca(2+)</name>
        <dbReference type="ChEBI" id="CHEBI:29108"/>
        <label>1</label>
    </ligand>
</feature>
<feature type="binding site" evidence="1">
    <location>
        <position position="56"/>
    </location>
    <ligand>
        <name>Ca(2+)</name>
        <dbReference type="ChEBI" id="CHEBI:29108"/>
        <label>1</label>
    </ligand>
</feature>
<feature type="binding site" evidence="1">
    <location>
        <position position="58"/>
    </location>
    <ligand>
        <name>Ca(2+)</name>
        <dbReference type="ChEBI" id="CHEBI:29108"/>
        <label>1</label>
    </ligand>
</feature>
<feature type="binding site" evidence="1 2">
    <location>
        <position position="61"/>
    </location>
    <ligand>
        <name>Ca(2+)</name>
        <dbReference type="ChEBI" id="CHEBI:29108"/>
        <label>1</label>
    </ligand>
</feature>
<feature type="binding site" evidence="1 2">
    <location>
        <position position="89"/>
    </location>
    <ligand>
        <name>Ca(2+)</name>
        <dbReference type="ChEBI" id="CHEBI:29108"/>
        <label>2</label>
    </ligand>
</feature>
<feature type="binding site" evidence="1 2">
    <location>
        <position position="91"/>
    </location>
    <ligand>
        <name>Ca(2+)</name>
        <dbReference type="ChEBI" id="CHEBI:29108"/>
        <label>2</label>
    </ligand>
</feature>
<feature type="binding site" evidence="1 2">
    <location>
        <position position="93"/>
    </location>
    <ligand>
        <name>Ca(2+)</name>
        <dbReference type="ChEBI" id="CHEBI:29108"/>
        <label>2</label>
    </ligand>
</feature>
<feature type="binding site" evidence="2">
    <location>
        <position position="95"/>
    </location>
    <ligand>
        <name>Ca(2+)</name>
        <dbReference type="ChEBI" id="CHEBI:29108"/>
        <label>2</label>
    </ligand>
</feature>
<feature type="binding site" evidence="1 2">
    <location>
        <position position="100"/>
    </location>
    <ligand>
        <name>Ca(2+)</name>
        <dbReference type="ChEBI" id="CHEBI:29108"/>
        <label>2</label>
    </ligand>
</feature>
<feature type="modified residue" description="N-acetylserine" evidence="3">
    <location>
        <position position="1"/>
    </location>
</feature>
<feature type="turn" evidence="6">
    <location>
        <begin position="2"/>
        <end position="4"/>
    </location>
</feature>
<feature type="helix" evidence="5">
    <location>
        <begin position="7"/>
        <end position="16"/>
    </location>
</feature>
<feature type="helix" evidence="5">
    <location>
        <begin position="25"/>
        <end position="31"/>
    </location>
</feature>
<feature type="helix" evidence="5">
    <location>
        <begin position="34"/>
        <end position="36"/>
    </location>
</feature>
<feature type="helix" evidence="5">
    <location>
        <begin position="39"/>
        <end position="49"/>
    </location>
</feature>
<feature type="strand" evidence="5">
    <location>
        <begin position="54"/>
        <end position="57"/>
    </location>
</feature>
<feature type="helix" evidence="5">
    <location>
        <begin position="59"/>
        <end position="63"/>
    </location>
</feature>
<feature type="helix" evidence="5">
    <location>
        <begin position="65"/>
        <end position="68"/>
    </location>
</feature>
<feature type="helix" evidence="5">
    <location>
        <begin position="78"/>
        <end position="88"/>
    </location>
</feature>
<feature type="strand" evidence="5">
    <location>
        <begin position="93"/>
        <end position="96"/>
    </location>
</feature>
<feature type="helix" evidence="5">
    <location>
        <begin position="98"/>
        <end position="106"/>
    </location>
</feature>
<name>PRVB_ESOLU</name>
<dbReference type="PIR" id="A03054">
    <property type="entry name" value="PVPK2"/>
</dbReference>
<dbReference type="PDB" id="1PAL">
    <property type="method" value="X-ray"/>
    <property type="resolution" value="1.65 A"/>
    <property type="chains" value="A=1-107"/>
</dbReference>
<dbReference type="PDB" id="1PVB">
    <property type="method" value="X-ray"/>
    <property type="resolution" value="1.75 A"/>
    <property type="chains" value="A=1-107"/>
</dbReference>
<dbReference type="PDB" id="2PAL">
    <property type="method" value="X-ray"/>
    <property type="resolution" value="1.80 A"/>
    <property type="chains" value="A=1-107"/>
</dbReference>
<dbReference type="PDB" id="2PVB">
    <property type="method" value="X-ray"/>
    <property type="resolution" value="0.91 A"/>
    <property type="chains" value="A=1-106"/>
</dbReference>
<dbReference type="PDB" id="3PAL">
    <property type="method" value="X-ray"/>
    <property type="resolution" value="2.40 A"/>
    <property type="chains" value="A=1-107"/>
</dbReference>
<dbReference type="PDB" id="4PAL">
    <property type="method" value="X-ray"/>
    <property type="resolution" value="1.80 A"/>
    <property type="chains" value="A=1-107"/>
</dbReference>
<dbReference type="PDBsum" id="1PAL"/>
<dbReference type="PDBsum" id="1PVB"/>
<dbReference type="PDBsum" id="2PAL"/>
<dbReference type="PDBsum" id="2PVB"/>
<dbReference type="PDBsum" id="3PAL"/>
<dbReference type="PDBsum" id="4PAL"/>
<dbReference type="SMR" id="P02619"/>
<dbReference type="FunCoup" id="P02619">
    <property type="interactions" value="5"/>
</dbReference>
<dbReference type="STRING" id="8010.ENSELUP00000018625"/>
<dbReference type="iPTMnet" id="P02619"/>
<dbReference type="InParanoid" id="P02619"/>
<dbReference type="EvolutionaryTrace" id="P02619"/>
<dbReference type="Proteomes" id="UP000265140">
    <property type="component" value="Unassembled WGS sequence"/>
</dbReference>
<dbReference type="GO" id="GO:0030424">
    <property type="term" value="C:axon"/>
    <property type="evidence" value="ECO:0000250"/>
    <property type="project" value="AgBase"/>
</dbReference>
<dbReference type="GO" id="GO:0043679">
    <property type="term" value="C:axon terminus"/>
    <property type="evidence" value="ECO:0000250"/>
    <property type="project" value="AgBase"/>
</dbReference>
<dbReference type="GO" id="GO:0005737">
    <property type="term" value="C:cytoplasm"/>
    <property type="evidence" value="ECO:0007669"/>
    <property type="project" value="TreeGrafter"/>
</dbReference>
<dbReference type="GO" id="GO:0030425">
    <property type="term" value="C:dendrite"/>
    <property type="evidence" value="ECO:0000250"/>
    <property type="project" value="AgBase"/>
</dbReference>
<dbReference type="GO" id="GO:0005509">
    <property type="term" value="F:calcium ion binding"/>
    <property type="evidence" value="ECO:0007669"/>
    <property type="project" value="InterPro"/>
</dbReference>
<dbReference type="DisProt" id="DP01025"/>
<dbReference type="FunFam" id="1.10.238.10:FF:000060">
    <property type="entry name" value="Parvalbumin, thymic"/>
    <property type="match status" value="1"/>
</dbReference>
<dbReference type="Gene3D" id="1.10.238.10">
    <property type="entry name" value="EF-hand"/>
    <property type="match status" value="1"/>
</dbReference>
<dbReference type="InterPro" id="IPR011992">
    <property type="entry name" value="EF-hand-dom_pair"/>
</dbReference>
<dbReference type="InterPro" id="IPR018247">
    <property type="entry name" value="EF_Hand_1_Ca_BS"/>
</dbReference>
<dbReference type="InterPro" id="IPR002048">
    <property type="entry name" value="EF_hand_dom"/>
</dbReference>
<dbReference type="InterPro" id="IPR008080">
    <property type="entry name" value="Parvalbumin"/>
</dbReference>
<dbReference type="PANTHER" id="PTHR11653:SF12">
    <property type="entry name" value="PARVALBUMIN"/>
    <property type="match status" value="1"/>
</dbReference>
<dbReference type="PANTHER" id="PTHR11653">
    <property type="entry name" value="PARVALBUMIN ALPHA"/>
    <property type="match status" value="1"/>
</dbReference>
<dbReference type="Pfam" id="PF13499">
    <property type="entry name" value="EF-hand_7"/>
    <property type="match status" value="1"/>
</dbReference>
<dbReference type="PRINTS" id="PR01697">
    <property type="entry name" value="PARVALBUMIN"/>
</dbReference>
<dbReference type="SMART" id="SM00054">
    <property type="entry name" value="EFh"/>
    <property type="match status" value="2"/>
</dbReference>
<dbReference type="SUPFAM" id="SSF47473">
    <property type="entry name" value="EF-hand"/>
    <property type="match status" value="1"/>
</dbReference>
<dbReference type="PROSITE" id="PS00018">
    <property type="entry name" value="EF_HAND_1"/>
    <property type="match status" value="2"/>
</dbReference>
<dbReference type="PROSITE" id="PS50222">
    <property type="entry name" value="EF_HAND_2"/>
    <property type="match status" value="2"/>
</dbReference>
<keyword id="KW-0002">3D-structure</keyword>
<keyword id="KW-0007">Acetylation</keyword>
<keyword id="KW-0106">Calcium</keyword>
<keyword id="KW-0903">Direct protein sequencing</keyword>
<keyword id="KW-0479">Metal-binding</keyword>
<keyword id="KW-0514">Muscle protein</keyword>
<keyword id="KW-1185">Reference proteome</keyword>
<keyword id="KW-0677">Repeat</keyword>
<sequence length="107" mass="11390">SFAGLKDADVAAALAACSAADSFKHKEFFAKVGLASKSLDDVKKAFYVIDQDKSGFIEEDELKLFLQNFSPSARALTDAETKAFLADGDKDGDGMIGVDEFAAMIKA</sequence>
<reference key="1">
    <citation type="journal article" date="1976" name="Eur. J. Biochem.">
        <title>The primary structure of the parvalbumin II of pike (Esox lucius).</title>
        <authorList>
            <person name="Gerday C."/>
        </authorList>
    </citation>
    <scope>PROTEIN SEQUENCE</scope>
    <scope>ACETYLATION AT SER-1</scope>
</reference>
<reference key="2">
    <citation type="journal article" date="1983" name="Arch. Biochem. Biophys.">
        <title>Comparative study of physiochemical properties of two pike parvalbumins by means of their intrinsic tyrosyl and phenylalanyl fluorescence.</title>
        <authorList>
            <person name="Permyakov E.A."/>
            <person name="Medvedkin V.N."/>
            <person name="Kalinichenko L.P."/>
            <person name="Burstein E.A."/>
        </authorList>
    </citation>
    <scope>CALCIUM-BINDING</scope>
</reference>
<reference key="3">
    <citation type="journal article" date="1988" name="J. Mol. Biol.">
        <title>Crystal structure determination and refinement of pike 4.10 parvalbumin (minor component from Esox lucius).</title>
        <authorList>
            <person name="Declercq J.-P."/>
            <person name="Tinant B."/>
            <person name="Parello J."/>
            <person name="Etienne G."/>
            <person name="Huber R."/>
        </authorList>
    </citation>
    <scope>X-RAY CRYSTALLOGRAPHY (1.98 ANGSTROMS)</scope>
</reference>
<reference key="4">
    <citation type="journal article" date="1991" name="J. Mol. Biol.">
        <title>Ionic interactions with parvalbumins. Crystal structure determination of pike 4.10 parvalbumin in four different ionic environments.</title>
        <authorList>
            <person name="Declercq J.-P."/>
            <person name="Tinant B."/>
            <person name="Parello J."/>
            <person name="Rambaud J."/>
        </authorList>
    </citation>
    <scope>X-RAY CRYSTALLOGRAPHY (1.65 ANGSTROMS)</scope>
</reference>
<reference key="5">
    <citation type="journal article" date="1996" name="Acta Crystallogr. D">
        <title>X-ray structure of a new crystal form of pike 4.10 beta parvalbumin.</title>
        <authorList>
            <person name="Declercq J.-P."/>
            <person name="Tinant B."/>
            <person name="Parello J."/>
        </authorList>
    </citation>
    <scope>X-RAY CRYSTALLOGRAPHY (1.65 ANGSTROMS)</scope>
</reference>
<reference key="6">
    <citation type="journal article" date="1999" name="Protein Sci.">
        <title>Crystal structure of the EF-hand parvalbumin at atomic resolution (0.91 A) and at low temperature (100 K). Evidence for conformational multistates within the hydrophobic core.</title>
        <authorList>
            <person name="Declercq J.-P."/>
            <person name="Evrard C."/>
            <person name="Lamzin V."/>
            <person name="Parello J."/>
        </authorList>
    </citation>
    <scope>X-RAY CRYSTALLOGRAPHY (0.91 ANGSTROMS)</scope>
</reference>
<comment type="function">
    <text>In muscle, parvalbumin is thought to be involved in relaxation after contraction. It binds two calcium ions.</text>
</comment>
<comment type="miscellaneous">
    <text>This is one of two major parvalbumins found in the white muscle of pike.</text>
</comment>
<comment type="miscellaneous">
    <text>This parvalbumin has an isoelectric point of 4.10.</text>
</comment>
<comment type="similarity">
    <text evidence="4">Belongs to the parvalbumin family.</text>
</comment>
<accession>P02619</accession>